<keyword id="KW-0520">NAD</keyword>
<keyword id="KW-0560">Oxidoreductase</keyword>
<keyword id="KW-1185">Reference proteome</keyword>
<keyword id="KW-0816">Tricarboxylic acid cycle</keyword>
<accession>Q1QQR2</accession>
<organism>
    <name type="scientific">Nitrobacter hamburgensis (strain DSM 10229 / NCIMB 13809 / X14)</name>
    <dbReference type="NCBI Taxonomy" id="323097"/>
    <lineage>
        <taxon>Bacteria</taxon>
        <taxon>Pseudomonadati</taxon>
        <taxon>Pseudomonadota</taxon>
        <taxon>Alphaproteobacteria</taxon>
        <taxon>Hyphomicrobiales</taxon>
        <taxon>Nitrobacteraceae</taxon>
        <taxon>Nitrobacter</taxon>
    </lineage>
</organism>
<sequence>MARDKIALIGSGQIGGTLAHLIGLKELGDVVMFDIAEGIPQGKSLDIAQSSPVDGFDAKLTGANSYEALEGARVCIVTAGIPRKPGMSRDDLLSINLKVMEQVGAGIKKYAPDAFVICITNPLDAMVWALQKASGMPAKKVVGMAGVLDSSRFRYFLADEFDVSVEDVTAFVLGGHGDSMVPLVKYSTVAGIPLPDLVKMGWTSQARIDEIVDRTRNGGAEIVNLLKTGSAFYAPAASAIAMAESYLRDKKRVLPCAAYLNGEFGVKDMYVGVPVVIGARGVERIVEIELAGKDREAFDKSVGAVQGLIDACKKIAPDLLGK</sequence>
<comment type="function">
    <text evidence="1">Catalyzes the reversible oxidation of malate to oxaloacetate.</text>
</comment>
<comment type="catalytic activity">
    <reaction evidence="1">
        <text>(S)-malate + NAD(+) = oxaloacetate + NADH + H(+)</text>
        <dbReference type="Rhea" id="RHEA:21432"/>
        <dbReference type="ChEBI" id="CHEBI:15378"/>
        <dbReference type="ChEBI" id="CHEBI:15589"/>
        <dbReference type="ChEBI" id="CHEBI:16452"/>
        <dbReference type="ChEBI" id="CHEBI:57540"/>
        <dbReference type="ChEBI" id="CHEBI:57945"/>
        <dbReference type="EC" id="1.1.1.37"/>
    </reaction>
</comment>
<comment type="similarity">
    <text evidence="1">Belongs to the LDH/MDH superfamily. MDH type 3 family.</text>
</comment>
<protein>
    <recommendedName>
        <fullName evidence="1">Malate dehydrogenase</fullName>
        <ecNumber evidence="1">1.1.1.37</ecNumber>
    </recommendedName>
</protein>
<gene>
    <name evidence="1" type="primary">mdh</name>
    <name type="ordered locus">Nham_0545</name>
</gene>
<reference key="1">
    <citation type="submission" date="2006-03" db="EMBL/GenBank/DDBJ databases">
        <title>Complete sequence of chromosome of Nitrobacter hamburgensis X14.</title>
        <authorList>
            <consortium name="US DOE Joint Genome Institute"/>
            <person name="Copeland A."/>
            <person name="Lucas S."/>
            <person name="Lapidus A."/>
            <person name="Barry K."/>
            <person name="Detter J.C."/>
            <person name="Glavina del Rio T."/>
            <person name="Hammon N."/>
            <person name="Israni S."/>
            <person name="Dalin E."/>
            <person name="Tice H."/>
            <person name="Pitluck S."/>
            <person name="Chain P."/>
            <person name="Malfatti S."/>
            <person name="Shin M."/>
            <person name="Vergez L."/>
            <person name="Schmutz J."/>
            <person name="Larimer F."/>
            <person name="Land M."/>
            <person name="Hauser L."/>
            <person name="Kyrpides N."/>
            <person name="Ivanova N."/>
            <person name="Ward B."/>
            <person name="Arp D."/>
            <person name="Klotz M."/>
            <person name="Stein L."/>
            <person name="O'Mullan G."/>
            <person name="Starkenburg S."/>
            <person name="Sayavedra L."/>
            <person name="Poret-Peterson A.T."/>
            <person name="Gentry M.E."/>
            <person name="Bruce D."/>
            <person name="Richardson P."/>
        </authorList>
    </citation>
    <scope>NUCLEOTIDE SEQUENCE [LARGE SCALE GENOMIC DNA]</scope>
    <source>
        <strain>DSM 10229 / NCIMB 13809 / X14</strain>
    </source>
</reference>
<proteinExistence type="inferred from homology"/>
<name>MDH_NITHX</name>
<dbReference type="EC" id="1.1.1.37" evidence="1"/>
<dbReference type="EMBL" id="CP000319">
    <property type="protein sequence ID" value="ABE61435.1"/>
    <property type="molecule type" value="Genomic_DNA"/>
</dbReference>
<dbReference type="RefSeq" id="WP_011509139.1">
    <property type="nucleotide sequence ID" value="NC_007964.1"/>
</dbReference>
<dbReference type="SMR" id="Q1QQR2"/>
<dbReference type="STRING" id="323097.Nham_0545"/>
<dbReference type="KEGG" id="nha:Nham_0545"/>
<dbReference type="eggNOG" id="COG0039">
    <property type="taxonomic scope" value="Bacteria"/>
</dbReference>
<dbReference type="HOGENOM" id="CLU_045401_2_1_5"/>
<dbReference type="OrthoDB" id="9802969at2"/>
<dbReference type="Proteomes" id="UP000001953">
    <property type="component" value="Chromosome"/>
</dbReference>
<dbReference type="GO" id="GO:0004459">
    <property type="term" value="F:L-lactate dehydrogenase activity"/>
    <property type="evidence" value="ECO:0007669"/>
    <property type="project" value="TreeGrafter"/>
</dbReference>
<dbReference type="GO" id="GO:0030060">
    <property type="term" value="F:L-malate dehydrogenase (NAD+) activity"/>
    <property type="evidence" value="ECO:0007669"/>
    <property type="project" value="UniProtKB-UniRule"/>
</dbReference>
<dbReference type="GO" id="GO:0006089">
    <property type="term" value="P:lactate metabolic process"/>
    <property type="evidence" value="ECO:0007669"/>
    <property type="project" value="TreeGrafter"/>
</dbReference>
<dbReference type="GO" id="GO:0006099">
    <property type="term" value="P:tricarboxylic acid cycle"/>
    <property type="evidence" value="ECO:0007669"/>
    <property type="project" value="UniProtKB-UniRule"/>
</dbReference>
<dbReference type="CDD" id="cd01339">
    <property type="entry name" value="LDH-like_MDH"/>
    <property type="match status" value="1"/>
</dbReference>
<dbReference type="FunFam" id="3.40.50.720:FF:000018">
    <property type="entry name" value="Malate dehydrogenase"/>
    <property type="match status" value="1"/>
</dbReference>
<dbReference type="FunFam" id="3.90.110.10:FF:000004">
    <property type="entry name" value="Malate dehydrogenase"/>
    <property type="match status" value="1"/>
</dbReference>
<dbReference type="Gene3D" id="3.90.110.10">
    <property type="entry name" value="Lactate dehydrogenase/glycoside hydrolase, family 4, C-terminal"/>
    <property type="match status" value="1"/>
</dbReference>
<dbReference type="Gene3D" id="3.40.50.720">
    <property type="entry name" value="NAD(P)-binding Rossmann-like Domain"/>
    <property type="match status" value="1"/>
</dbReference>
<dbReference type="HAMAP" id="MF_00487">
    <property type="entry name" value="Malate_dehydrog_3"/>
    <property type="match status" value="1"/>
</dbReference>
<dbReference type="InterPro" id="IPR001557">
    <property type="entry name" value="L-lactate/malate_DH"/>
</dbReference>
<dbReference type="InterPro" id="IPR022383">
    <property type="entry name" value="Lactate/malate_DH_C"/>
</dbReference>
<dbReference type="InterPro" id="IPR001236">
    <property type="entry name" value="Lactate/malate_DH_N"/>
</dbReference>
<dbReference type="InterPro" id="IPR015955">
    <property type="entry name" value="Lactate_DH/Glyco_Ohase_4_C"/>
</dbReference>
<dbReference type="InterPro" id="IPR011275">
    <property type="entry name" value="Malate_DH_type3"/>
</dbReference>
<dbReference type="InterPro" id="IPR036291">
    <property type="entry name" value="NAD(P)-bd_dom_sf"/>
</dbReference>
<dbReference type="NCBIfam" id="TIGR01763">
    <property type="entry name" value="MalateDH_bact"/>
    <property type="match status" value="1"/>
</dbReference>
<dbReference type="NCBIfam" id="NF004863">
    <property type="entry name" value="PRK06223.1"/>
    <property type="match status" value="1"/>
</dbReference>
<dbReference type="PANTHER" id="PTHR43128">
    <property type="entry name" value="L-2-HYDROXYCARBOXYLATE DEHYDROGENASE (NAD(P)(+))"/>
    <property type="match status" value="1"/>
</dbReference>
<dbReference type="PANTHER" id="PTHR43128:SF16">
    <property type="entry name" value="L-LACTATE DEHYDROGENASE"/>
    <property type="match status" value="1"/>
</dbReference>
<dbReference type="Pfam" id="PF02866">
    <property type="entry name" value="Ldh_1_C"/>
    <property type="match status" value="1"/>
</dbReference>
<dbReference type="Pfam" id="PF00056">
    <property type="entry name" value="Ldh_1_N"/>
    <property type="match status" value="1"/>
</dbReference>
<dbReference type="PIRSF" id="PIRSF000102">
    <property type="entry name" value="Lac_mal_DH"/>
    <property type="match status" value="1"/>
</dbReference>
<dbReference type="PRINTS" id="PR00086">
    <property type="entry name" value="LLDHDRGNASE"/>
</dbReference>
<dbReference type="SUPFAM" id="SSF56327">
    <property type="entry name" value="LDH C-terminal domain-like"/>
    <property type="match status" value="1"/>
</dbReference>
<dbReference type="SUPFAM" id="SSF51735">
    <property type="entry name" value="NAD(P)-binding Rossmann-fold domains"/>
    <property type="match status" value="1"/>
</dbReference>
<feature type="chain" id="PRO_1000026479" description="Malate dehydrogenase">
    <location>
        <begin position="1"/>
        <end position="322"/>
    </location>
</feature>
<feature type="active site" description="Proton acceptor" evidence="1">
    <location>
        <position position="176"/>
    </location>
</feature>
<feature type="binding site" evidence="1">
    <location>
        <begin position="10"/>
        <end position="15"/>
    </location>
    <ligand>
        <name>NAD(+)</name>
        <dbReference type="ChEBI" id="CHEBI:57540"/>
    </ligand>
</feature>
<feature type="binding site" evidence="1">
    <location>
        <position position="34"/>
    </location>
    <ligand>
        <name>NAD(+)</name>
        <dbReference type="ChEBI" id="CHEBI:57540"/>
    </ligand>
</feature>
<feature type="binding site" evidence="1">
    <location>
        <position position="83"/>
    </location>
    <ligand>
        <name>substrate</name>
    </ligand>
</feature>
<feature type="binding site" evidence="1">
    <location>
        <position position="89"/>
    </location>
    <ligand>
        <name>substrate</name>
    </ligand>
</feature>
<feature type="binding site" evidence="1">
    <location>
        <position position="96"/>
    </location>
    <ligand>
        <name>NAD(+)</name>
        <dbReference type="ChEBI" id="CHEBI:57540"/>
    </ligand>
</feature>
<feature type="binding site" evidence="1">
    <location>
        <begin position="119"/>
        <end position="121"/>
    </location>
    <ligand>
        <name>NAD(+)</name>
        <dbReference type="ChEBI" id="CHEBI:57540"/>
    </ligand>
</feature>
<feature type="binding site" evidence="1">
    <location>
        <position position="121"/>
    </location>
    <ligand>
        <name>substrate</name>
    </ligand>
</feature>
<feature type="binding site" evidence="1">
    <location>
        <position position="152"/>
    </location>
    <ligand>
        <name>substrate</name>
    </ligand>
</feature>
<evidence type="ECO:0000255" key="1">
    <source>
        <dbReference type="HAMAP-Rule" id="MF_00487"/>
    </source>
</evidence>